<organism>
    <name type="scientific">Helicobacter hepaticus (strain ATCC 51449 / 3B1)</name>
    <dbReference type="NCBI Taxonomy" id="235279"/>
    <lineage>
        <taxon>Bacteria</taxon>
        <taxon>Pseudomonadati</taxon>
        <taxon>Campylobacterota</taxon>
        <taxon>Epsilonproteobacteria</taxon>
        <taxon>Campylobacterales</taxon>
        <taxon>Helicobacteraceae</taxon>
        <taxon>Helicobacter</taxon>
    </lineage>
</organism>
<proteinExistence type="inferred from homology"/>
<dbReference type="EC" id="3.1.11.6" evidence="1"/>
<dbReference type="EMBL" id="AE017125">
    <property type="protein sequence ID" value="AAP78329.1"/>
    <property type="molecule type" value="Genomic_DNA"/>
</dbReference>
<dbReference type="RefSeq" id="WP_011116571.1">
    <property type="nucleotide sequence ID" value="NC_004917.1"/>
</dbReference>
<dbReference type="SMR" id="Q7VFE5"/>
<dbReference type="STRING" id="235279.HH_1732"/>
<dbReference type="KEGG" id="hhe:HH_1732"/>
<dbReference type="eggNOG" id="COG1570">
    <property type="taxonomic scope" value="Bacteria"/>
</dbReference>
<dbReference type="HOGENOM" id="CLU_023625_2_0_7"/>
<dbReference type="OrthoDB" id="9802795at2"/>
<dbReference type="Proteomes" id="UP000002495">
    <property type="component" value="Chromosome"/>
</dbReference>
<dbReference type="GO" id="GO:0005737">
    <property type="term" value="C:cytoplasm"/>
    <property type="evidence" value="ECO:0007669"/>
    <property type="project" value="UniProtKB-SubCell"/>
</dbReference>
<dbReference type="GO" id="GO:0009318">
    <property type="term" value="C:exodeoxyribonuclease VII complex"/>
    <property type="evidence" value="ECO:0007669"/>
    <property type="project" value="InterPro"/>
</dbReference>
<dbReference type="GO" id="GO:0008855">
    <property type="term" value="F:exodeoxyribonuclease VII activity"/>
    <property type="evidence" value="ECO:0007669"/>
    <property type="project" value="UniProtKB-UniRule"/>
</dbReference>
<dbReference type="GO" id="GO:0003676">
    <property type="term" value="F:nucleic acid binding"/>
    <property type="evidence" value="ECO:0007669"/>
    <property type="project" value="InterPro"/>
</dbReference>
<dbReference type="GO" id="GO:0006308">
    <property type="term" value="P:DNA catabolic process"/>
    <property type="evidence" value="ECO:0007669"/>
    <property type="project" value="UniProtKB-UniRule"/>
</dbReference>
<dbReference type="CDD" id="cd04489">
    <property type="entry name" value="ExoVII_LU_OBF"/>
    <property type="match status" value="1"/>
</dbReference>
<dbReference type="Gene3D" id="2.40.50.1010">
    <property type="match status" value="1"/>
</dbReference>
<dbReference type="HAMAP" id="MF_00378">
    <property type="entry name" value="Exonuc_7_L"/>
    <property type="match status" value="1"/>
</dbReference>
<dbReference type="InterPro" id="IPR003753">
    <property type="entry name" value="Exonuc_VII_L"/>
</dbReference>
<dbReference type="InterPro" id="IPR020579">
    <property type="entry name" value="Exonuc_VII_lsu_C"/>
</dbReference>
<dbReference type="InterPro" id="IPR025824">
    <property type="entry name" value="OB-fold_nuc-bd_dom"/>
</dbReference>
<dbReference type="NCBIfam" id="TIGR00237">
    <property type="entry name" value="xseA"/>
    <property type="match status" value="1"/>
</dbReference>
<dbReference type="PANTHER" id="PTHR30008">
    <property type="entry name" value="EXODEOXYRIBONUCLEASE 7 LARGE SUBUNIT"/>
    <property type="match status" value="1"/>
</dbReference>
<dbReference type="PANTHER" id="PTHR30008:SF0">
    <property type="entry name" value="EXODEOXYRIBONUCLEASE 7 LARGE SUBUNIT"/>
    <property type="match status" value="1"/>
</dbReference>
<dbReference type="Pfam" id="PF02601">
    <property type="entry name" value="Exonuc_VII_L"/>
    <property type="match status" value="1"/>
</dbReference>
<dbReference type="Pfam" id="PF13742">
    <property type="entry name" value="tRNA_anti_2"/>
    <property type="match status" value="1"/>
</dbReference>
<accession>Q7VFE5</accession>
<feature type="chain" id="PRO_0000273660" description="Exodeoxyribonuclease 7 large subunit">
    <location>
        <begin position="1"/>
        <end position="417"/>
    </location>
</feature>
<evidence type="ECO:0000255" key="1">
    <source>
        <dbReference type="HAMAP-Rule" id="MF_00378"/>
    </source>
</evidence>
<gene>
    <name evidence="1" type="primary">xseA</name>
    <name type="ordered locus">HH_1732</name>
</gene>
<comment type="function">
    <text evidence="1">Bidirectionally degrades single-stranded DNA into large acid-insoluble oligonucleotides, which are then degraded further into small acid-soluble oligonucleotides.</text>
</comment>
<comment type="catalytic activity">
    <reaction evidence="1">
        <text>Exonucleolytic cleavage in either 5'- to 3'- or 3'- to 5'-direction to yield nucleoside 5'-phosphates.</text>
        <dbReference type="EC" id="3.1.11.6"/>
    </reaction>
</comment>
<comment type="subunit">
    <text evidence="1">Heterooligomer composed of large and small subunits.</text>
</comment>
<comment type="subcellular location">
    <subcellularLocation>
        <location evidence="1">Cytoplasm</location>
    </subcellularLocation>
</comment>
<comment type="similarity">
    <text evidence="1">Belongs to the XseA family.</text>
</comment>
<keyword id="KW-0963">Cytoplasm</keyword>
<keyword id="KW-0269">Exonuclease</keyword>
<keyword id="KW-0378">Hydrolase</keyword>
<keyword id="KW-0540">Nuclease</keyword>
<keyword id="KW-1185">Reference proteome</keyword>
<protein>
    <recommendedName>
        <fullName evidence="1">Exodeoxyribonuclease 7 large subunit</fullName>
        <ecNumber evidence="1">3.1.11.6</ecNumber>
    </recommendedName>
    <alternativeName>
        <fullName evidence="1">Exodeoxyribonuclease VII large subunit</fullName>
        <shortName evidence="1">Exonuclease VII large subunit</shortName>
    </alternativeName>
</protein>
<reference key="1">
    <citation type="journal article" date="2003" name="Proc. Natl. Acad. Sci. U.S.A.">
        <title>The complete genome sequence of the carcinogenic bacterium Helicobacter hepaticus.</title>
        <authorList>
            <person name="Suerbaum S."/>
            <person name="Josenhans C."/>
            <person name="Sterzenbach T."/>
            <person name="Drescher B."/>
            <person name="Brandt P."/>
            <person name="Bell M."/>
            <person name="Droege M."/>
            <person name="Fartmann B."/>
            <person name="Fischer H.-P."/>
            <person name="Ge Z."/>
            <person name="Hoerster A."/>
            <person name="Holland R."/>
            <person name="Klein K."/>
            <person name="Koenig J."/>
            <person name="Macko L."/>
            <person name="Mendz G.L."/>
            <person name="Nyakatura G."/>
            <person name="Schauer D.B."/>
            <person name="Shen Z."/>
            <person name="Weber J."/>
            <person name="Frosch M."/>
            <person name="Fox J.G."/>
        </authorList>
    </citation>
    <scope>NUCLEOTIDE SEQUENCE [LARGE SCALE GENOMIC DNA]</scope>
    <source>
        <strain>ATCC 51449 / 3B1</strain>
    </source>
</reference>
<name>EX7L_HELHP</name>
<sequence>MRALEVSEINAQIKSILESTFMDICVRGEISNVTIHTSGHIYLTLKDESSSVRCVMFKGNARNLKIKLEVGQSVLIMGSLSVYVPKGEYQILCKSITLAGLGELSQAYEALKTKLGAKGYFESAHKKPLPRFPKRIALLTSATGAAKEDMLKVAHKRWNLVHITLFNTLVQGEGAKDSIVENLKRADSFFGTSESFDVIVLGRGGGSMEDMWAFNEECVADAIYSARTPIISAVGHEVDVFISDFVADVRAPTPSAAMEILLPDKNEYLRVLDEIMNSYFYALKQQFVLKSQALERMREYFKLYNFEQRYCAKVEQINIFQQMMRDSMNAVLEDKMLKYEHIFLSLNARCEEKLQQCQYEYERMLEVFNALNPHSLSTRGYAQISKEGKPCRLSDIDINEEFYLSDMTHSILAKRLQ</sequence>